<evidence type="ECO:0000255" key="1">
    <source>
        <dbReference type="HAMAP-Rule" id="MF_01328"/>
    </source>
</evidence>
<evidence type="ECO:0000256" key="2">
    <source>
        <dbReference type="SAM" id="MobiDB-lite"/>
    </source>
</evidence>
<gene>
    <name evidence="1" type="primary">rplD</name>
    <name evidence="1" type="synonym">rpl4</name>
    <name type="ordered locus">CYA_1177</name>
</gene>
<comment type="function">
    <text evidence="1">One of the primary rRNA binding proteins, this protein initially binds near the 5'-end of the 23S rRNA. It is important during the early stages of 50S assembly. It makes multiple contacts with different domains of the 23S rRNA in the assembled 50S subunit and ribosome.</text>
</comment>
<comment type="function">
    <text evidence="1">Forms part of the polypeptide exit tunnel.</text>
</comment>
<comment type="subunit">
    <text evidence="1">Part of the 50S ribosomal subunit.</text>
</comment>
<comment type="similarity">
    <text evidence="1">Belongs to the universal ribosomal protein uL4 family.</text>
</comment>
<sequence length="326" mass="35864">MASCVVKNWQGETVGSAELSLKVARPETASHILYLALRRQMTNARQGNAHTKTRAEVRGGGRKPWRQKGTGRARAGSIRSPLWRKGGVIFGPRKREYNLAMNRKERQLALRTALQSRVEDLIVVEDFQDQLNPPKTRAVAQALLRWGVMEDQSALLIVAERSEAVERAVRNIARVKLIGLDQLNVFDLLNVDWVLITTSALEKLKARWGSGAAAAAPTQADRLEDQAQAAEREARPVEQAEGQSQEQEEQAEAQAQPEAPPAQADQANQVALANPQVQETQEEELAQAQEREVQGQAELAQEAEPLAQPPAGEEAETAAAEEEDND</sequence>
<dbReference type="EMBL" id="CP000239">
    <property type="protein sequence ID" value="ABC99365.1"/>
    <property type="molecule type" value="Genomic_DNA"/>
</dbReference>
<dbReference type="SMR" id="Q2JV82"/>
<dbReference type="STRING" id="321327.CYA_1177"/>
<dbReference type="KEGG" id="cya:CYA_1177"/>
<dbReference type="eggNOG" id="COG0088">
    <property type="taxonomic scope" value="Bacteria"/>
</dbReference>
<dbReference type="HOGENOM" id="CLU_852406_0_0_3"/>
<dbReference type="OrthoDB" id="9803201at2"/>
<dbReference type="Proteomes" id="UP000008818">
    <property type="component" value="Chromosome"/>
</dbReference>
<dbReference type="GO" id="GO:1990904">
    <property type="term" value="C:ribonucleoprotein complex"/>
    <property type="evidence" value="ECO:0007669"/>
    <property type="project" value="UniProtKB-KW"/>
</dbReference>
<dbReference type="GO" id="GO:0005840">
    <property type="term" value="C:ribosome"/>
    <property type="evidence" value="ECO:0007669"/>
    <property type="project" value="UniProtKB-KW"/>
</dbReference>
<dbReference type="GO" id="GO:0019843">
    <property type="term" value="F:rRNA binding"/>
    <property type="evidence" value="ECO:0007669"/>
    <property type="project" value="UniProtKB-UniRule"/>
</dbReference>
<dbReference type="GO" id="GO:0003735">
    <property type="term" value="F:structural constituent of ribosome"/>
    <property type="evidence" value="ECO:0007669"/>
    <property type="project" value="InterPro"/>
</dbReference>
<dbReference type="GO" id="GO:0006412">
    <property type="term" value="P:translation"/>
    <property type="evidence" value="ECO:0007669"/>
    <property type="project" value="UniProtKB-UniRule"/>
</dbReference>
<dbReference type="Gene3D" id="3.40.1370.10">
    <property type="match status" value="1"/>
</dbReference>
<dbReference type="HAMAP" id="MF_01328_B">
    <property type="entry name" value="Ribosomal_uL4_B"/>
    <property type="match status" value="1"/>
</dbReference>
<dbReference type="InterPro" id="IPR002136">
    <property type="entry name" value="Ribosomal_uL4"/>
</dbReference>
<dbReference type="InterPro" id="IPR013005">
    <property type="entry name" value="Ribosomal_uL4-like"/>
</dbReference>
<dbReference type="InterPro" id="IPR023574">
    <property type="entry name" value="Ribosomal_uL4_dom_sf"/>
</dbReference>
<dbReference type="NCBIfam" id="TIGR03953">
    <property type="entry name" value="rplD_bact"/>
    <property type="match status" value="1"/>
</dbReference>
<dbReference type="PANTHER" id="PTHR10746">
    <property type="entry name" value="50S RIBOSOMAL PROTEIN L4"/>
    <property type="match status" value="1"/>
</dbReference>
<dbReference type="PANTHER" id="PTHR10746:SF17">
    <property type="entry name" value="LARGE RIBOSOMAL SUBUNIT PROTEIN UL4C"/>
    <property type="match status" value="1"/>
</dbReference>
<dbReference type="Pfam" id="PF00573">
    <property type="entry name" value="Ribosomal_L4"/>
    <property type="match status" value="1"/>
</dbReference>
<dbReference type="SUPFAM" id="SSF52166">
    <property type="entry name" value="Ribosomal protein L4"/>
    <property type="match status" value="1"/>
</dbReference>
<accession>Q2JV82</accession>
<name>RL4_SYNJA</name>
<proteinExistence type="inferred from homology"/>
<protein>
    <recommendedName>
        <fullName evidence="1">Large ribosomal subunit protein uL4</fullName>
    </recommendedName>
    <alternativeName>
        <fullName>50S ribosomal protein L4</fullName>
    </alternativeName>
</protein>
<reference key="1">
    <citation type="journal article" date="2007" name="ISME J.">
        <title>Population level functional diversity in a microbial community revealed by comparative genomic and metagenomic analyses.</title>
        <authorList>
            <person name="Bhaya D."/>
            <person name="Grossman A.R."/>
            <person name="Steunou A.-S."/>
            <person name="Khuri N."/>
            <person name="Cohan F.M."/>
            <person name="Hamamura N."/>
            <person name="Melendrez M.C."/>
            <person name="Bateson M.M."/>
            <person name="Ward D.M."/>
            <person name="Heidelberg J.F."/>
        </authorList>
    </citation>
    <scope>NUCLEOTIDE SEQUENCE [LARGE SCALE GENOMIC DNA]</scope>
    <source>
        <strain>JA-3-3Ab</strain>
    </source>
</reference>
<feature type="chain" id="PRO_0000242451" description="Large ribosomal subunit protein uL4">
    <location>
        <begin position="1"/>
        <end position="326"/>
    </location>
</feature>
<feature type="region of interest" description="Large ribosomal subunit protein uL4">
    <location>
        <begin position="1"/>
        <end position="211"/>
    </location>
</feature>
<feature type="region of interest" description="Disordered" evidence="2">
    <location>
        <begin position="44"/>
        <end position="76"/>
    </location>
</feature>
<feature type="region of interest" description="Disordered" evidence="2">
    <location>
        <begin position="211"/>
        <end position="326"/>
    </location>
</feature>
<feature type="region of interest" description="Unknown">
    <location>
        <begin position="212"/>
        <end position="326"/>
    </location>
</feature>
<feature type="compositionally biased region" description="Basic residues" evidence="2">
    <location>
        <begin position="60"/>
        <end position="71"/>
    </location>
</feature>
<feature type="compositionally biased region" description="Basic and acidic residues" evidence="2">
    <location>
        <begin position="221"/>
        <end position="238"/>
    </location>
</feature>
<feature type="compositionally biased region" description="Low complexity" evidence="2">
    <location>
        <begin position="252"/>
        <end position="279"/>
    </location>
</feature>
<feature type="compositionally biased region" description="Low complexity" evidence="2">
    <location>
        <begin position="294"/>
        <end position="312"/>
    </location>
</feature>
<feature type="compositionally biased region" description="Acidic residues" evidence="2">
    <location>
        <begin position="313"/>
        <end position="326"/>
    </location>
</feature>
<keyword id="KW-0687">Ribonucleoprotein</keyword>
<keyword id="KW-0689">Ribosomal protein</keyword>
<keyword id="KW-0694">RNA-binding</keyword>
<keyword id="KW-0699">rRNA-binding</keyword>
<organism>
    <name type="scientific">Synechococcus sp. (strain JA-3-3Ab)</name>
    <name type="common">Cyanobacteria bacterium Yellowstone A-Prime</name>
    <dbReference type="NCBI Taxonomy" id="321327"/>
    <lineage>
        <taxon>Bacteria</taxon>
        <taxon>Bacillati</taxon>
        <taxon>Cyanobacteriota</taxon>
        <taxon>Cyanophyceae</taxon>
        <taxon>Synechococcales</taxon>
        <taxon>Synechococcaceae</taxon>
        <taxon>Synechococcus</taxon>
    </lineage>
</organism>